<sequence>MSFSPRGPSRPVLRRRRRGAALPTVVILVAVVIAVVVGARITADVWWFDQLGFLPTFTTKLWLQVLLFTLGALLLAAAVAVSLTLGYRARPIYAPVSDEQAGLDRYRESLEPLRRLVVVVLSAAAGLFGGSVAMSRWETLLLWWNRVDFGTRDEQFRMDQGFYVFTLPWLAFLVSFLTAAVVLAGIAGLAAHYLYGGLRLSGAGPRTTRAARVHLASLAAAFLLLRAAGYWLDRYELMTTSSGYVRGVVGPTYTDVHAVLPSKAILALIAVVVALLFVAAAVGTSWRLPAIGTGLLVVSAIAIGGIYPWAVQRFQVTPNRQSLESEYVGKNIDATRDAYDLSDVEVSTYAADTTASQGQLSEDAQTIPSVRLLDPSVVSQAFQQTQGQRGYYKFGETLDVDRYATPDGGTQDAVVAARELNLAGLADNQRTWVNEHTIYTHGYGVVVAQGNDRAPDGSPSYVEANVPTSGDLDLEQPRIYFGEGTTTYSIVGGRDNEIDYPDGSAGGFATTEYDGSGGVAVGSLLQKLVYGLKFGDQNILLSGSVTPESRILYDRTPRERVEKVAPWLTMDGDAYPSIVDGRVVWILDGYTTSNSYPYSAATELGDATTDALTQTQGSSVQALQDRTVNYVRNSVKATVDAYTGKVDLYAWDDTDPVLKAWMKAFPGAVEPLSAIDGSLMQHLRYPQDMFKVQREVLTRYHVTDPASFLTGQDFWDVPGDPTVDAAAGTVRPSQPPYYLTLRMPEQDTPTYSLTTTYVPASNANASGTQVLRGFAAVDSDAGSTKGTKSEGYGTIRLLELPQSTTVNGPVQIQNNIRSDTAVADQVRLLSVGDNSRVIYGNLLTLPVGGGLLYVEPIYAQSTGDNSFPRLSRVVAVFGDNIAIANTLDEALDEVFGGNSGAGAGDEGAPPPTAGTPAPTDGATGGPAPDPATGDAQVQLQQALDNAKRAIQDSSAALAEGDFTKYGEAQQRLRAAVDAASAAEARLERSGTSGPTSSSSPSASSAPPVPGETPAATPTP</sequence>
<reference key="1">
    <citation type="journal article" date="2008" name="PLoS ONE">
        <title>Survival in nuclear waste, extreme resistance, and potential applications gleaned from the genome sequence of Kineococcus radiotolerans SRS30216.</title>
        <authorList>
            <person name="Bagwell C.E."/>
            <person name="Bhat S."/>
            <person name="Hawkins G.M."/>
            <person name="Smith B.W."/>
            <person name="Biswas T."/>
            <person name="Hoover T.R."/>
            <person name="Saunders E."/>
            <person name="Han C.S."/>
            <person name="Tsodikov O.V."/>
            <person name="Shimkets L.J."/>
        </authorList>
    </citation>
    <scope>NUCLEOTIDE SEQUENCE [LARGE SCALE GENOMIC DNA]</scope>
    <source>
        <strain>ATCC BAA-149 / DSM 14245 / SRS30216</strain>
    </source>
</reference>
<gene>
    <name type="ordered locus">Krad_1193</name>
</gene>
<protein>
    <recommendedName>
        <fullName evidence="1">UPF0182 protein Krad_1193</fullName>
    </recommendedName>
</protein>
<accession>A6W792</accession>
<feature type="chain" id="PRO_0000335547" description="UPF0182 protein Krad_1193">
    <location>
        <begin position="1"/>
        <end position="1019"/>
    </location>
</feature>
<feature type="transmembrane region" description="Helical" evidence="1">
    <location>
        <begin position="19"/>
        <end position="39"/>
    </location>
</feature>
<feature type="transmembrane region" description="Helical" evidence="1">
    <location>
        <begin position="61"/>
        <end position="81"/>
    </location>
</feature>
<feature type="transmembrane region" description="Helical" evidence="1">
    <location>
        <begin position="115"/>
        <end position="135"/>
    </location>
</feature>
<feature type="transmembrane region" description="Helical" evidence="1">
    <location>
        <begin position="169"/>
        <end position="189"/>
    </location>
</feature>
<feature type="transmembrane region" description="Helical" evidence="1">
    <location>
        <begin position="213"/>
        <end position="233"/>
    </location>
</feature>
<feature type="transmembrane region" description="Helical" evidence="1">
    <location>
        <begin position="264"/>
        <end position="284"/>
    </location>
</feature>
<feature type="transmembrane region" description="Helical" evidence="1">
    <location>
        <begin position="291"/>
        <end position="311"/>
    </location>
</feature>
<feature type="region of interest" description="Disordered" evidence="2">
    <location>
        <begin position="897"/>
        <end position="934"/>
    </location>
</feature>
<feature type="region of interest" description="Disordered" evidence="2">
    <location>
        <begin position="977"/>
        <end position="1019"/>
    </location>
</feature>
<feature type="compositionally biased region" description="Low complexity" evidence="2">
    <location>
        <begin position="977"/>
        <end position="1005"/>
    </location>
</feature>
<feature type="compositionally biased region" description="Pro residues" evidence="2">
    <location>
        <begin position="1006"/>
        <end position="1019"/>
    </location>
</feature>
<dbReference type="EMBL" id="CP000750">
    <property type="protein sequence ID" value="ABS02681.1"/>
    <property type="molecule type" value="Genomic_DNA"/>
</dbReference>
<dbReference type="RefSeq" id="WP_012084464.1">
    <property type="nucleotide sequence ID" value="NC_009664.2"/>
</dbReference>
<dbReference type="SMR" id="A6W792"/>
<dbReference type="STRING" id="266940.Krad_1193"/>
<dbReference type="KEGG" id="kra:Krad_1193"/>
<dbReference type="eggNOG" id="COG1615">
    <property type="taxonomic scope" value="Bacteria"/>
</dbReference>
<dbReference type="HOGENOM" id="CLU_007733_1_0_11"/>
<dbReference type="OrthoDB" id="9763654at2"/>
<dbReference type="Proteomes" id="UP000001116">
    <property type="component" value="Chromosome"/>
</dbReference>
<dbReference type="GO" id="GO:0005576">
    <property type="term" value="C:extracellular region"/>
    <property type="evidence" value="ECO:0007669"/>
    <property type="project" value="TreeGrafter"/>
</dbReference>
<dbReference type="GO" id="GO:0005886">
    <property type="term" value="C:plasma membrane"/>
    <property type="evidence" value="ECO:0007669"/>
    <property type="project" value="UniProtKB-SubCell"/>
</dbReference>
<dbReference type="HAMAP" id="MF_01600">
    <property type="entry name" value="UPF0182"/>
    <property type="match status" value="1"/>
</dbReference>
<dbReference type="InterPro" id="IPR005372">
    <property type="entry name" value="UPF0182"/>
</dbReference>
<dbReference type="PANTHER" id="PTHR39344">
    <property type="entry name" value="UPF0182 PROTEIN SLL1060"/>
    <property type="match status" value="1"/>
</dbReference>
<dbReference type="PANTHER" id="PTHR39344:SF1">
    <property type="entry name" value="UPF0182 PROTEIN SLL1060"/>
    <property type="match status" value="1"/>
</dbReference>
<dbReference type="Pfam" id="PF03699">
    <property type="entry name" value="UPF0182"/>
    <property type="match status" value="1"/>
</dbReference>
<keyword id="KW-1003">Cell membrane</keyword>
<keyword id="KW-0472">Membrane</keyword>
<keyword id="KW-1185">Reference proteome</keyword>
<keyword id="KW-0812">Transmembrane</keyword>
<keyword id="KW-1133">Transmembrane helix</keyword>
<name>Y1193_KINRD</name>
<proteinExistence type="inferred from homology"/>
<comment type="subcellular location">
    <subcellularLocation>
        <location evidence="1">Cell membrane</location>
        <topology evidence="1">Multi-pass membrane protein</topology>
    </subcellularLocation>
</comment>
<comment type="similarity">
    <text evidence="1">Belongs to the UPF0182 family.</text>
</comment>
<evidence type="ECO:0000255" key="1">
    <source>
        <dbReference type="HAMAP-Rule" id="MF_01600"/>
    </source>
</evidence>
<evidence type="ECO:0000256" key="2">
    <source>
        <dbReference type="SAM" id="MobiDB-lite"/>
    </source>
</evidence>
<organism>
    <name type="scientific">Kineococcus radiotolerans (strain ATCC BAA-149 / DSM 14245 / SRS30216)</name>
    <dbReference type="NCBI Taxonomy" id="266940"/>
    <lineage>
        <taxon>Bacteria</taxon>
        <taxon>Bacillati</taxon>
        <taxon>Actinomycetota</taxon>
        <taxon>Actinomycetes</taxon>
        <taxon>Kineosporiales</taxon>
        <taxon>Kineosporiaceae</taxon>
        <taxon>Kineococcus</taxon>
    </lineage>
</organism>